<comment type="function">
    <text evidence="1">Part of the Sec protein translocase complex. Interacts with the SecYEG preprotein conducting channel. Has a central role in coupling the hydrolysis of ATP to the transfer of proteins into and across the cell membrane, serving both as a receptor for the preprotein-SecB complex and as an ATP-driven molecular motor driving the stepwise translocation of polypeptide chains across the membrane.</text>
</comment>
<comment type="catalytic activity">
    <reaction evidence="1">
        <text>ATP + H2O + cellular proteinSide 1 = ADP + phosphate + cellular proteinSide 2.</text>
        <dbReference type="EC" id="7.4.2.8"/>
    </reaction>
</comment>
<comment type="cofactor">
    <cofactor evidence="1">
        <name>Zn(2+)</name>
        <dbReference type="ChEBI" id="CHEBI:29105"/>
    </cofactor>
    <text evidence="1">May bind 1 zinc ion per subunit.</text>
</comment>
<comment type="subunit">
    <text evidence="1">Monomer and homodimer. Part of the essential Sec protein translocation apparatus which comprises SecA, SecYEG and auxiliary proteins SecDF-YajC and YidC.</text>
</comment>
<comment type="subcellular location">
    <subcellularLocation>
        <location evidence="1">Cell inner membrane</location>
        <topology evidence="1">Peripheral membrane protein</topology>
        <orientation evidence="1">Cytoplasmic side</orientation>
    </subcellularLocation>
    <subcellularLocation>
        <location evidence="1">Cytoplasm</location>
    </subcellularLocation>
    <text evidence="1">Distribution is 50-50.</text>
</comment>
<comment type="similarity">
    <text evidence="1">Belongs to the SecA family.</text>
</comment>
<feature type="chain" id="PRO_0000320995" description="Protein translocase subunit SecA">
    <location>
        <begin position="1"/>
        <end position="908"/>
    </location>
</feature>
<feature type="region of interest" description="Disordered" evidence="2">
    <location>
        <begin position="866"/>
        <end position="908"/>
    </location>
</feature>
<feature type="compositionally biased region" description="Basic and acidic residues" evidence="2">
    <location>
        <begin position="879"/>
        <end position="888"/>
    </location>
</feature>
<feature type="compositionally biased region" description="Basic residues" evidence="2">
    <location>
        <begin position="898"/>
        <end position="908"/>
    </location>
</feature>
<feature type="binding site" evidence="1">
    <location>
        <position position="87"/>
    </location>
    <ligand>
        <name>ATP</name>
        <dbReference type="ChEBI" id="CHEBI:30616"/>
    </ligand>
</feature>
<feature type="binding site" evidence="1">
    <location>
        <begin position="105"/>
        <end position="109"/>
    </location>
    <ligand>
        <name>ATP</name>
        <dbReference type="ChEBI" id="CHEBI:30616"/>
    </ligand>
</feature>
<feature type="binding site" evidence="1">
    <location>
        <position position="512"/>
    </location>
    <ligand>
        <name>ATP</name>
        <dbReference type="ChEBI" id="CHEBI:30616"/>
    </ligand>
</feature>
<feature type="binding site" evidence="1">
    <location>
        <position position="892"/>
    </location>
    <ligand>
        <name>Zn(2+)</name>
        <dbReference type="ChEBI" id="CHEBI:29105"/>
    </ligand>
</feature>
<feature type="binding site" evidence="1">
    <location>
        <position position="894"/>
    </location>
    <ligand>
        <name>Zn(2+)</name>
        <dbReference type="ChEBI" id="CHEBI:29105"/>
    </ligand>
</feature>
<feature type="binding site" evidence="1">
    <location>
        <position position="903"/>
    </location>
    <ligand>
        <name>Zn(2+)</name>
        <dbReference type="ChEBI" id="CHEBI:29105"/>
    </ligand>
</feature>
<feature type="binding site" evidence="1">
    <location>
        <position position="904"/>
    </location>
    <ligand>
        <name>Zn(2+)</name>
        <dbReference type="ChEBI" id="CHEBI:29105"/>
    </ligand>
</feature>
<protein>
    <recommendedName>
        <fullName evidence="1">Protein translocase subunit SecA</fullName>
        <ecNumber evidence="1">7.4.2.8</ecNumber>
    </recommendedName>
</protein>
<evidence type="ECO:0000255" key="1">
    <source>
        <dbReference type="HAMAP-Rule" id="MF_01382"/>
    </source>
</evidence>
<evidence type="ECO:0000256" key="2">
    <source>
        <dbReference type="SAM" id="MobiDB-lite"/>
    </source>
</evidence>
<accession>Q8E9Q5</accession>
<sequence length="908" mass="102623">MFGKLLTKVFGSRNDRTLKGLQKVVNKINALEADYEKLTDEQLKAKTAEFRERLAAGASLDSIMAEAFATVREASKRVFEMRHFDVQLLGGMVLDSNRIAEMRTGEGKTLTATLPAYLNALTGKGVHVITVNDYLARRDAENNRPLFEFLGLTVGINVAGLGQQDKKDAYNADITYGTNNEFGFDYLRDNMAFSPQERVQRPLHYALIDEVDSILIDEARTPLIISGAAEDSSELYIKINTLIPNLIRQDKEDSEEYVGEGDYTIDEKAKQVHFTERGQEKVENLLIERGMLAEGDSLYSAANISLLHHVNAALRAHTLFERDVDYIVQDGEVIIVDEHTGRTMPGRRWSEGLHQAVEAKEGVRIQNENQTLASITFQNYFRLYEKLAGMTGTADTEAFEFQHIYGLDTVVVPTNRPMVRKDMADLVYLTANEKYQAIIKDIKDCRERGQPVLVGTVSIEQSELLARLMVKEKIPHQVLNAKFHEKEAEIVAQAGRTGAVTIATNMAGRGTDIVLGGNWNMEIDALENPTPEQKAKIKADWQLRHDAVVAAGGLHILGTERHESRRIDNQLRGRAGRQGDAGSSRFYLSMEDSLMRIFASDRVSGMMKKLGMEEGEAIEHPWVSRAIENAQRKVEARNFDIRKQLLEFDDVANDQRQVVYAQRNELMDAESIADTIQNIQDDVISAVIDQYIPPQSVEELWDVPGLEQRLHQEFMLKLPIQEWLDKEDDLHEESLRERIITSWSDAYKAKEEMVGASVLRQFEKAVMLQTLDGLWKEHLAAMDHLRQGIHLRGYAQKNPKQEYKRESFELFQQLLNTLKHDVISVLSKVQVQAQSDVEEMEARRREEDAKIQRDYQHAAAEALVGGSDEDDAIAAHTPMIRDGDKVGRNDPCPCGSGRKYKQCHGKLS</sequence>
<dbReference type="EC" id="7.4.2.8" evidence="1"/>
<dbReference type="EMBL" id="AE014299">
    <property type="protein sequence ID" value="AAN57183.1"/>
    <property type="molecule type" value="Genomic_DNA"/>
</dbReference>
<dbReference type="RefSeq" id="NP_719739.1">
    <property type="nucleotide sequence ID" value="NC_004347.2"/>
</dbReference>
<dbReference type="RefSeq" id="WP_011073892.1">
    <property type="nucleotide sequence ID" value="NC_004347.2"/>
</dbReference>
<dbReference type="SMR" id="Q8E9Q5"/>
<dbReference type="STRING" id="211586.SO_4211"/>
<dbReference type="PaxDb" id="211586-SO_4211"/>
<dbReference type="KEGG" id="son:SO_4211"/>
<dbReference type="PATRIC" id="fig|211586.12.peg.4069"/>
<dbReference type="eggNOG" id="COG0653">
    <property type="taxonomic scope" value="Bacteria"/>
</dbReference>
<dbReference type="HOGENOM" id="CLU_005314_3_0_6"/>
<dbReference type="OrthoDB" id="9805579at2"/>
<dbReference type="PhylomeDB" id="Q8E9Q5"/>
<dbReference type="BioCyc" id="SONE211586:G1GMP-3888-MONOMER"/>
<dbReference type="Proteomes" id="UP000008186">
    <property type="component" value="Chromosome"/>
</dbReference>
<dbReference type="GO" id="GO:0031522">
    <property type="term" value="C:cell envelope Sec protein transport complex"/>
    <property type="evidence" value="ECO:0000318"/>
    <property type="project" value="GO_Central"/>
</dbReference>
<dbReference type="GO" id="GO:0005737">
    <property type="term" value="C:cytoplasm"/>
    <property type="evidence" value="ECO:0007669"/>
    <property type="project" value="UniProtKB-SubCell"/>
</dbReference>
<dbReference type="GO" id="GO:0005886">
    <property type="term" value="C:plasma membrane"/>
    <property type="evidence" value="ECO:0000318"/>
    <property type="project" value="GO_Central"/>
</dbReference>
<dbReference type="GO" id="GO:0005524">
    <property type="term" value="F:ATP binding"/>
    <property type="evidence" value="ECO:0000318"/>
    <property type="project" value="GO_Central"/>
</dbReference>
<dbReference type="GO" id="GO:0046872">
    <property type="term" value="F:metal ion binding"/>
    <property type="evidence" value="ECO:0007669"/>
    <property type="project" value="UniProtKB-KW"/>
</dbReference>
<dbReference type="GO" id="GO:0008564">
    <property type="term" value="F:protein-exporting ATPase activity"/>
    <property type="evidence" value="ECO:0007669"/>
    <property type="project" value="UniProtKB-EC"/>
</dbReference>
<dbReference type="GO" id="GO:0065002">
    <property type="term" value="P:intracellular protein transmembrane transport"/>
    <property type="evidence" value="ECO:0007669"/>
    <property type="project" value="UniProtKB-UniRule"/>
</dbReference>
<dbReference type="GO" id="GO:0017038">
    <property type="term" value="P:protein import"/>
    <property type="evidence" value="ECO:0007669"/>
    <property type="project" value="InterPro"/>
</dbReference>
<dbReference type="GO" id="GO:0006605">
    <property type="term" value="P:protein targeting"/>
    <property type="evidence" value="ECO:0007669"/>
    <property type="project" value="UniProtKB-UniRule"/>
</dbReference>
<dbReference type="GO" id="GO:0043952">
    <property type="term" value="P:protein transport by the Sec complex"/>
    <property type="evidence" value="ECO:0000318"/>
    <property type="project" value="GO_Central"/>
</dbReference>
<dbReference type="CDD" id="cd17928">
    <property type="entry name" value="DEXDc_SecA"/>
    <property type="match status" value="1"/>
</dbReference>
<dbReference type="CDD" id="cd18803">
    <property type="entry name" value="SF2_C_secA"/>
    <property type="match status" value="1"/>
</dbReference>
<dbReference type="FunFam" id="1.10.3060.10:FF:000001">
    <property type="entry name" value="Preprotein translocase subunit SecA"/>
    <property type="match status" value="1"/>
</dbReference>
<dbReference type="FunFam" id="3.40.50.300:FF:000081">
    <property type="entry name" value="Preprotein translocase subunit SecA"/>
    <property type="match status" value="1"/>
</dbReference>
<dbReference type="FunFam" id="3.40.50.300:FF:000113">
    <property type="entry name" value="Preprotein translocase subunit SecA"/>
    <property type="match status" value="1"/>
</dbReference>
<dbReference type="FunFam" id="3.90.1440.10:FF:000001">
    <property type="entry name" value="Preprotein translocase subunit SecA"/>
    <property type="match status" value="1"/>
</dbReference>
<dbReference type="Gene3D" id="1.10.3060.10">
    <property type="entry name" value="Helical scaffold and wing domains of SecA"/>
    <property type="match status" value="1"/>
</dbReference>
<dbReference type="Gene3D" id="3.40.50.300">
    <property type="entry name" value="P-loop containing nucleotide triphosphate hydrolases"/>
    <property type="match status" value="2"/>
</dbReference>
<dbReference type="Gene3D" id="3.90.1440.10">
    <property type="entry name" value="SecA, preprotein cross-linking domain"/>
    <property type="match status" value="1"/>
</dbReference>
<dbReference type="HAMAP" id="MF_01382">
    <property type="entry name" value="SecA"/>
    <property type="match status" value="1"/>
</dbReference>
<dbReference type="InterPro" id="IPR014001">
    <property type="entry name" value="Helicase_ATP-bd"/>
</dbReference>
<dbReference type="InterPro" id="IPR001650">
    <property type="entry name" value="Helicase_C-like"/>
</dbReference>
<dbReference type="InterPro" id="IPR027417">
    <property type="entry name" value="P-loop_NTPase"/>
</dbReference>
<dbReference type="InterPro" id="IPR004027">
    <property type="entry name" value="SEC_C_motif"/>
</dbReference>
<dbReference type="InterPro" id="IPR000185">
    <property type="entry name" value="SecA"/>
</dbReference>
<dbReference type="InterPro" id="IPR020937">
    <property type="entry name" value="SecA_CS"/>
</dbReference>
<dbReference type="InterPro" id="IPR011115">
    <property type="entry name" value="SecA_DEAD"/>
</dbReference>
<dbReference type="InterPro" id="IPR014018">
    <property type="entry name" value="SecA_motor_DEAD"/>
</dbReference>
<dbReference type="InterPro" id="IPR011130">
    <property type="entry name" value="SecA_preprotein_X-link_dom"/>
</dbReference>
<dbReference type="InterPro" id="IPR044722">
    <property type="entry name" value="SecA_SF2_C"/>
</dbReference>
<dbReference type="InterPro" id="IPR011116">
    <property type="entry name" value="SecA_Wing/Scaffold"/>
</dbReference>
<dbReference type="InterPro" id="IPR036266">
    <property type="entry name" value="SecA_Wing/Scaffold_sf"/>
</dbReference>
<dbReference type="InterPro" id="IPR036670">
    <property type="entry name" value="SecA_X-link_sf"/>
</dbReference>
<dbReference type="NCBIfam" id="NF009538">
    <property type="entry name" value="PRK12904.1"/>
    <property type="match status" value="1"/>
</dbReference>
<dbReference type="NCBIfam" id="TIGR00963">
    <property type="entry name" value="secA"/>
    <property type="match status" value="1"/>
</dbReference>
<dbReference type="PANTHER" id="PTHR30612:SF0">
    <property type="entry name" value="CHLOROPLAST PROTEIN-TRANSPORTING ATPASE"/>
    <property type="match status" value="1"/>
</dbReference>
<dbReference type="PANTHER" id="PTHR30612">
    <property type="entry name" value="SECA INNER MEMBRANE COMPONENT OF SEC PROTEIN SECRETION SYSTEM"/>
    <property type="match status" value="1"/>
</dbReference>
<dbReference type="Pfam" id="PF21090">
    <property type="entry name" value="P-loop_SecA"/>
    <property type="match status" value="1"/>
</dbReference>
<dbReference type="Pfam" id="PF02810">
    <property type="entry name" value="SEC-C"/>
    <property type="match status" value="1"/>
</dbReference>
<dbReference type="Pfam" id="PF07517">
    <property type="entry name" value="SecA_DEAD"/>
    <property type="match status" value="1"/>
</dbReference>
<dbReference type="Pfam" id="PF01043">
    <property type="entry name" value="SecA_PP_bind"/>
    <property type="match status" value="1"/>
</dbReference>
<dbReference type="Pfam" id="PF07516">
    <property type="entry name" value="SecA_SW"/>
    <property type="match status" value="1"/>
</dbReference>
<dbReference type="PRINTS" id="PR00906">
    <property type="entry name" value="SECA"/>
</dbReference>
<dbReference type="SMART" id="SM00957">
    <property type="entry name" value="SecA_DEAD"/>
    <property type="match status" value="1"/>
</dbReference>
<dbReference type="SMART" id="SM00958">
    <property type="entry name" value="SecA_PP_bind"/>
    <property type="match status" value="1"/>
</dbReference>
<dbReference type="SUPFAM" id="SSF81886">
    <property type="entry name" value="Helical scaffold and wing domains of SecA"/>
    <property type="match status" value="1"/>
</dbReference>
<dbReference type="SUPFAM" id="SSF52540">
    <property type="entry name" value="P-loop containing nucleoside triphosphate hydrolases"/>
    <property type="match status" value="2"/>
</dbReference>
<dbReference type="SUPFAM" id="SSF81767">
    <property type="entry name" value="Pre-protein crosslinking domain of SecA"/>
    <property type="match status" value="1"/>
</dbReference>
<dbReference type="PROSITE" id="PS01312">
    <property type="entry name" value="SECA"/>
    <property type="match status" value="1"/>
</dbReference>
<dbReference type="PROSITE" id="PS51196">
    <property type="entry name" value="SECA_MOTOR_DEAD"/>
    <property type="match status" value="1"/>
</dbReference>
<reference key="1">
    <citation type="journal article" date="2002" name="Nat. Biotechnol.">
        <title>Genome sequence of the dissimilatory metal ion-reducing bacterium Shewanella oneidensis.</title>
        <authorList>
            <person name="Heidelberg J.F."/>
            <person name="Paulsen I.T."/>
            <person name="Nelson K.E."/>
            <person name="Gaidos E.J."/>
            <person name="Nelson W.C."/>
            <person name="Read T.D."/>
            <person name="Eisen J.A."/>
            <person name="Seshadri R."/>
            <person name="Ward N.L."/>
            <person name="Methe B.A."/>
            <person name="Clayton R.A."/>
            <person name="Meyer T."/>
            <person name="Tsapin A."/>
            <person name="Scott J."/>
            <person name="Beanan M.J."/>
            <person name="Brinkac L.M."/>
            <person name="Daugherty S.C."/>
            <person name="DeBoy R.T."/>
            <person name="Dodson R.J."/>
            <person name="Durkin A.S."/>
            <person name="Haft D.H."/>
            <person name="Kolonay J.F."/>
            <person name="Madupu R."/>
            <person name="Peterson J.D."/>
            <person name="Umayam L.A."/>
            <person name="White O."/>
            <person name="Wolf A.M."/>
            <person name="Vamathevan J.J."/>
            <person name="Weidman J.F."/>
            <person name="Impraim M."/>
            <person name="Lee K."/>
            <person name="Berry K.J."/>
            <person name="Lee C."/>
            <person name="Mueller J."/>
            <person name="Khouri H.M."/>
            <person name="Gill J."/>
            <person name="Utterback T.R."/>
            <person name="McDonald L.A."/>
            <person name="Feldblyum T.V."/>
            <person name="Smith H.O."/>
            <person name="Venter J.C."/>
            <person name="Nealson K.H."/>
            <person name="Fraser C.M."/>
        </authorList>
    </citation>
    <scope>NUCLEOTIDE SEQUENCE [LARGE SCALE GENOMIC DNA]</scope>
    <source>
        <strain>ATCC 700550 / JCM 31522 / CIP 106686 / LMG 19005 / NCIMB 14063 / MR-1</strain>
    </source>
</reference>
<organism>
    <name type="scientific">Shewanella oneidensis (strain ATCC 700550 / JCM 31522 / CIP 106686 / LMG 19005 / NCIMB 14063 / MR-1)</name>
    <dbReference type="NCBI Taxonomy" id="211586"/>
    <lineage>
        <taxon>Bacteria</taxon>
        <taxon>Pseudomonadati</taxon>
        <taxon>Pseudomonadota</taxon>
        <taxon>Gammaproteobacteria</taxon>
        <taxon>Alteromonadales</taxon>
        <taxon>Shewanellaceae</taxon>
        <taxon>Shewanella</taxon>
    </lineage>
</organism>
<keyword id="KW-0067">ATP-binding</keyword>
<keyword id="KW-0997">Cell inner membrane</keyword>
<keyword id="KW-1003">Cell membrane</keyword>
<keyword id="KW-0963">Cytoplasm</keyword>
<keyword id="KW-0472">Membrane</keyword>
<keyword id="KW-0479">Metal-binding</keyword>
<keyword id="KW-0547">Nucleotide-binding</keyword>
<keyword id="KW-0653">Protein transport</keyword>
<keyword id="KW-1185">Reference proteome</keyword>
<keyword id="KW-1278">Translocase</keyword>
<keyword id="KW-0811">Translocation</keyword>
<keyword id="KW-0813">Transport</keyword>
<keyword id="KW-0862">Zinc</keyword>
<name>SECA_SHEON</name>
<proteinExistence type="inferred from homology"/>
<gene>
    <name evidence="1" type="primary">secA</name>
    <name type="ordered locus">SO_4211</name>
</gene>